<dbReference type="EC" id="6.3.2.-" evidence="8"/>
<dbReference type="EMBL" id="ACJE01000005">
    <property type="protein sequence ID" value="EHA25778.1"/>
    <property type="molecule type" value="Genomic_DNA"/>
</dbReference>
<dbReference type="SMR" id="G3XUF0"/>
<dbReference type="STRING" id="380704.G3XUF0"/>
<dbReference type="HOGENOM" id="CLU_000022_60_0_1"/>
<dbReference type="OrthoDB" id="45369at5052"/>
<dbReference type="Proteomes" id="UP000009038">
    <property type="component" value="Unassembled WGS sequence"/>
</dbReference>
<dbReference type="GO" id="GO:0005737">
    <property type="term" value="C:cytoplasm"/>
    <property type="evidence" value="ECO:0007669"/>
    <property type="project" value="TreeGrafter"/>
</dbReference>
<dbReference type="GO" id="GO:0016874">
    <property type="term" value="F:ligase activity"/>
    <property type="evidence" value="ECO:0007669"/>
    <property type="project" value="UniProtKB-KW"/>
</dbReference>
<dbReference type="GO" id="GO:0031177">
    <property type="term" value="F:phosphopantetheine binding"/>
    <property type="evidence" value="ECO:0007669"/>
    <property type="project" value="InterPro"/>
</dbReference>
<dbReference type="GO" id="GO:0043041">
    <property type="term" value="P:amino acid activation for nonribosomal peptide biosynthetic process"/>
    <property type="evidence" value="ECO:0007669"/>
    <property type="project" value="TreeGrafter"/>
</dbReference>
<dbReference type="GO" id="GO:0044550">
    <property type="term" value="P:secondary metabolite biosynthetic process"/>
    <property type="evidence" value="ECO:0007669"/>
    <property type="project" value="TreeGrafter"/>
</dbReference>
<dbReference type="CDD" id="cd05918">
    <property type="entry name" value="A_NRPS_SidN3_like"/>
    <property type="match status" value="4"/>
</dbReference>
<dbReference type="CDD" id="cd19542">
    <property type="entry name" value="CT_NRPS-like"/>
    <property type="match status" value="1"/>
</dbReference>
<dbReference type="CDD" id="cd19534">
    <property type="entry name" value="E_NRPS"/>
    <property type="match status" value="1"/>
</dbReference>
<dbReference type="CDD" id="cd19545">
    <property type="entry name" value="FUM14_C_NRPS-like"/>
    <property type="match status" value="1"/>
</dbReference>
<dbReference type="FunFam" id="3.30.559.10:FF:000016">
    <property type="entry name" value="Nonribosomal peptide synthase Pes1"/>
    <property type="match status" value="1"/>
</dbReference>
<dbReference type="FunFam" id="3.30.559.30:FF:000002">
    <property type="entry name" value="Nonribosomal peptide synthase Pes1"/>
    <property type="match status" value="1"/>
</dbReference>
<dbReference type="FunFam" id="3.30.300.30:FF:000015">
    <property type="entry name" value="Nonribosomal peptide synthase SidD"/>
    <property type="match status" value="4"/>
</dbReference>
<dbReference type="FunFam" id="3.30.559.30:FF:000003">
    <property type="entry name" value="Nonribosomal peptide synthase SidD"/>
    <property type="match status" value="1"/>
</dbReference>
<dbReference type="FunFam" id="1.10.1200.10:FF:000005">
    <property type="entry name" value="Nonribosomal peptide synthetase 1"/>
    <property type="match status" value="1"/>
</dbReference>
<dbReference type="Gene3D" id="3.30.300.30">
    <property type="match status" value="4"/>
</dbReference>
<dbReference type="Gene3D" id="1.10.1200.10">
    <property type="entry name" value="ACP-like"/>
    <property type="match status" value="4"/>
</dbReference>
<dbReference type="Gene3D" id="3.30.559.10">
    <property type="entry name" value="Chloramphenicol acetyltransferase-like domain"/>
    <property type="match status" value="5"/>
</dbReference>
<dbReference type="Gene3D" id="3.40.50.12780">
    <property type="entry name" value="N-terminal domain of ligase-like"/>
    <property type="match status" value="4"/>
</dbReference>
<dbReference type="Gene3D" id="3.30.559.30">
    <property type="entry name" value="Nonribosomal peptide synthetase, condensation domain"/>
    <property type="match status" value="5"/>
</dbReference>
<dbReference type="InterPro" id="IPR010071">
    <property type="entry name" value="AA_adenyl_dom"/>
</dbReference>
<dbReference type="InterPro" id="IPR036736">
    <property type="entry name" value="ACP-like_sf"/>
</dbReference>
<dbReference type="InterPro" id="IPR045851">
    <property type="entry name" value="AMP-bd_C_sf"/>
</dbReference>
<dbReference type="InterPro" id="IPR020845">
    <property type="entry name" value="AMP-binding_CS"/>
</dbReference>
<dbReference type="InterPro" id="IPR000873">
    <property type="entry name" value="AMP-dep_synth/lig_dom"/>
</dbReference>
<dbReference type="InterPro" id="IPR042099">
    <property type="entry name" value="ANL_N_sf"/>
</dbReference>
<dbReference type="InterPro" id="IPR023213">
    <property type="entry name" value="CAT-like_dom_sf"/>
</dbReference>
<dbReference type="InterPro" id="IPR001242">
    <property type="entry name" value="Condensatn"/>
</dbReference>
<dbReference type="InterPro" id="IPR020806">
    <property type="entry name" value="PKS_PP-bd"/>
</dbReference>
<dbReference type="InterPro" id="IPR009081">
    <property type="entry name" value="PP-bd_ACP"/>
</dbReference>
<dbReference type="InterPro" id="IPR006162">
    <property type="entry name" value="Ppantetheine_attach_site"/>
</dbReference>
<dbReference type="NCBIfam" id="TIGR01733">
    <property type="entry name" value="AA-adenyl-dom"/>
    <property type="match status" value="4"/>
</dbReference>
<dbReference type="NCBIfam" id="NF003417">
    <property type="entry name" value="PRK04813.1"/>
    <property type="match status" value="4"/>
</dbReference>
<dbReference type="PANTHER" id="PTHR45527:SF1">
    <property type="entry name" value="FATTY ACID SYNTHASE"/>
    <property type="match status" value="1"/>
</dbReference>
<dbReference type="PANTHER" id="PTHR45527">
    <property type="entry name" value="NONRIBOSOMAL PEPTIDE SYNTHETASE"/>
    <property type="match status" value="1"/>
</dbReference>
<dbReference type="Pfam" id="PF00501">
    <property type="entry name" value="AMP-binding"/>
    <property type="match status" value="4"/>
</dbReference>
<dbReference type="Pfam" id="PF00668">
    <property type="entry name" value="Condensation"/>
    <property type="match status" value="5"/>
</dbReference>
<dbReference type="Pfam" id="PF00550">
    <property type="entry name" value="PP-binding"/>
    <property type="match status" value="4"/>
</dbReference>
<dbReference type="SMART" id="SM00823">
    <property type="entry name" value="PKS_PP"/>
    <property type="match status" value="3"/>
</dbReference>
<dbReference type="SMART" id="SM01294">
    <property type="entry name" value="PKS_PP_betabranch"/>
    <property type="match status" value="1"/>
</dbReference>
<dbReference type="SUPFAM" id="SSF56801">
    <property type="entry name" value="Acetyl-CoA synthetase-like"/>
    <property type="match status" value="4"/>
</dbReference>
<dbReference type="SUPFAM" id="SSF47336">
    <property type="entry name" value="ACP-like"/>
    <property type="match status" value="4"/>
</dbReference>
<dbReference type="SUPFAM" id="SSF52777">
    <property type="entry name" value="CoA-dependent acyltransferases"/>
    <property type="match status" value="10"/>
</dbReference>
<dbReference type="PROSITE" id="PS00455">
    <property type="entry name" value="AMP_BINDING"/>
    <property type="match status" value="3"/>
</dbReference>
<dbReference type="PROSITE" id="PS50075">
    <property type="entry name" value="CARRIER"/>
    <property type="match status" value="4"/>
</dbReference>
<dbReference type="PROSITE" id="PS00012">
    <property type="entry name" value="PHOSPHOPANTETHEINE"/>
    <property type="match status" value="1"/>
</dbReference>
<proteinExistence type="evidence at protein level"/>
<name>MLFA_ASPNA</name>
<sequence length="4870" mass="535293">MSRRSLINAAEQLLHPGPVGAGQVSGESANTIITFEKDIESLFVTQAEAANVGTAMAQALAEVGADDHNRLIKNLNLMSPTHLESIWQFNANVPGMWEECFHDVIERRAANRPHSLAVDAWDMKLTYADLVREARLLAAYLQHRGVRPGSVVPISFERSGAALVAMLAVSKAGGAFVSVPPTLPAGRLDAILEVIEAPFVVTWSKYEPFWAERLPTLPIDSYPKPSADATVKTLGKPEDLFYVIFTSGSTGRPKGCMLSHSNWLNGALRNAPSWKYGPESRVLQMLSHTFDMSLLEICTSLGSGACVCVPRTEEIETSVSDAINRWQVNHVIMTPSLARSLRRDDVPGLKTMCLGGEAFPREIVTMWSERINLWQFYGPSECSINSSSRPITRPDADPLNIGPPNSAACWVVDTQDYNKLVPVGAIGELLVSGPIVGMGYLKNPIKTAEAFLDEVGFVAKDDPQFGGFRFYRTGDLVRWNSDGTITFCGRADTQVKLNGQRLELAEVEYQLGLEAGVQYAIAMAPQSGRCKNNLIAVLTVKCGGASNQGNADDEIPLLDRHDPIVQQTVKKLRSQLQHALPRYMVPTIWAFVGRMPMSPSGKIDRVQLRNWVQEMSQETFDAITGRSFEAEDHVLGLSQLEQEIQLAWAEALGLSAAEVGLQQPFVALGGDSIKALDAVARCRARQIKISMVHILSCEGVREASSLAEVQETPAHQVAEIAVDYSDLWTRLSTEYDISKLGVTQVEEVEDVFPCTTMQEGMFLGQIRRPGAYHMRFFHRVQLKGGSLPTVERIQQAWASLVERHPSLRTVFVDDLSSEAIYHSVVLRSVPMELTMREVPRDLNPESALAMFTEELVPFRPNAPLHRMLLLTCRGRVPYLMLEISHVIMDGYALSVFRREFIRACSSTASLPRGPDYRMFANYHRTRQTDESAKYWTNYLADCVPCHIPTDPLSVPTDASPEWPRTLQRRDFGFDNSVAFLQRCKERQVTLACAIRAAWALVLRAYTQSRDVCFGYVSSGRNVPVPEVETIFGLCLSMQGLFNTAISMEWVPPTAEDEDALLDLEEIREQDDPTEYDIAISVDIHEGHIKLGFLYWPNLSDFQITHLAEALQGAMNCFAFQPDVALNTLTLLQASDLCSTLTNGPTLLPLEAVRGNVISMIDRWVTRQPESPAIDGWDGSLTYKQLHEQSSWVARNLLHQGVKLGDRILVCADRSSRTVVTILGVVRAGCVLVLSNPTDPEKRLQWLAHKCNATLVVVDPAYEERFATSGARVFSTTSVCAPAAWDYEFSALDDQDLVSILFTSGSTGTPKGILMDHGALATSVLLGHGRTLRFSRHTRMLHFASLTFDAALAEIFTTLAHGGCICVPCEEDRLSDVSGCISRFAVNTAMLTPSVGRLLDPEALPTLKALAMIGEPMSRLDVERFAPVLDLYNGAGPTETSIMVTIAGPMKPTDEPVNLGYAVAGVRLWVTEAENPNRLAPLGAVGELIVEGRLVTRGYLDDPARTRESFLPNLPWLPSQHALYRTGDLVRYAEDGSLRYMGRKDTQVKLRGQRIELQEVEYHLRKSLQQAQVVVEMVIPEGKIRAQASLVAFVSGLTAADVESSSARNFDQSMPMSQIALPGSTIQALEEALPRYMIPSVYFALDTIPLSVNGKADRRRLREIGAALLVSSTAHKNTVDGKSEPVKWTASSKLELTLLELWTTTLGLEAETIYGDDSFFELGGDSVSAMKLVATARDRFKLSLSVPQMFRHPTIHQLAAILGEATGQPESSASSTTEEGFTFSTPDDSSTNDGVDDDFLRLATAQLAQLAQEKGKKVDIAALLKQLQGGSSSCKTPSVSSSSSSSSSRKKKSAKVVSPVEAPAPVPVPFSLLDGGADVVEKIRAQAVEQCKILPGDIEDIYPATALQEGMMALMARTPGVYTTTLTCELPERVNLARLHSAWDKAAEAHPILRTRIILTENNTAVQVVQRAKELPWDAYSLQDGDPLPDLTSNMTLGSTLLRLAEIHRQNQPRMLLVAIHHALYDGWSMPLLKQAVEDVYHGQELWPQPFTPFINYLNEGKPAAQGYWTAHLDGFAGSVFPNLPSINHHIQPTERRTRSLAVPTAPPGSQYTMATKIQAAWAVTVSRYAEAEDIVFGTVSTGRSAPVPSIDRMVGPTITTVPVRISLGNQAERLTSLLQRVQEDGWNRMDHEHLGLQHIRRLGESAAAACNLQTLLVIQPREEPRAKSISTLLSGLQDVAELKGVDTYPLMLVCEPDGVSLHLTAVFDPAVLDAVMLDRMLAHWELVLNQIWSEPDMAVMGLDGVSYRDKQTLVRWNAGEKIADGCAHDAVYEWSVRTPHAPAVFAWDGKWTYEELEKCSSLIASQVLVHGVSSGDFVALYHEKSRWAAAAILAVFKAGGILVTLDPAHPKDRIKDILDQARPRLVLTSQSLLDEARELETPVMVVQFAASQPMPGECFPLPTVSPTQAAYAPFTSGSTGRPKGIPLEHRGLAASTASVARACLLRPASRVLHFASFAFDASMMEHLIAWHAGSCLCIPVETVRQTDLARCIRDFEVTWAFLTPSCLRLISPDDVQSLEALGLGGESMTPEDIFIWGPRLRQIVQLYGPAECSIVAALTEVTKPSENRLIGRPNACRCWVVDPHSPDRLAPLGAVGELVIEGITVGRGYIDDPERTTQAFIPPPTWIQTLYPNEQQPSRLYRTGDLVRYAGTDGKLTFIGRRDGQLKLHGQRIELADVEAHLRPLIPGTQKVVVEMVHSVGNHHPLLAAFVEEILTSQDQVEQVVNLLHPSQTQCALNVKAIDSALSQTVPQYMIPSMYLHISRLPLSASGKLNRRHLRRLVAEFPRQRLSEYAAGSGLAVPNRPATAQEREMQAIWARVLSVDPDTIGVNEDFFRIGGDSISGMQVATRCNAAGMHITSADLFQHRTIEQLMRHLSANGKTGSASISLPPEPVDEWVPLAPIQQLFFEIAPQGPDHFNQSLLLRTSRRVSAEKLAGGLDILVGRHSMLRARFCRDDSGQWSQQVRSRGPYPASAFYRLTTHNHIAPELLSSLLAASQMALSIQEGPLLAVDLVNLTDDTQLVYLVAHHLIIDLVSWRILHAELEEYLQTGSFASTTGSVPFLTWSRAQAEYSANHLTPTLPLPGFQEANDGFDASRYWGISCESNTFGQTSTSTFTLDQTVTDQLFGPANNVLDTRPAEILQAALWYSFTQSLTDRPGPSIYVEGHGREPWTGSIDLSGTVGWFTTMSPLVSAPWDSLSQTSMRDFLDALSYIKDQRRRIPANGWAYFTSRYLNDEGKVAYGRMKPVVEILFNYMGQYQEMNREDAILQLAGDGIQSGTGAADVADNVPRFSLIDVSAFISNGCLTFQFILPKSLQQDSRLQGCFQEYERTLVAAANSLSTEGPRKTLADFPLMPALTYDQLSQCLDHTLPSMGLCARDVVDIYPCSPVQQGMLLAQLRDRQAYQQRFRFQVKSRGSTDRLTLEKLKDAWTEVINRHDILRTLLLPVSDYSHLDQVVMAPGSLQHLVRINAMDTNPTQGLPHSINITSDSTGTVICEWNVSHALVDAMSIAVIQQEVNEALEGSLGQHQKTPRYADYIQWLSLQDNTETQAYWKKYLEGVEPCLFPKLASSTDKVNPEGTISAIRATWTRDSRLDKLCHTHGITLTNLFHIVWSLLLSAYLGTDKVCFGYTTLGRDVPVDGVEKMVGPLVNVIATTIQLQEDDSILDALLTHQTHLSNSLQHQHYALADVYASLGLVGSQLFNTIVSLQDISHFDANDERPTRVEMLPANDVSEYDVALNIGVDQSSIQVVCSYRTLSLSVEQADALLRTTSHVLDEILRDPKQPLRDLEVISPQCKEQLVKWNAAMPAPTDEYIHEKIQDQCRLHSSREAACAWDGIFTFAEVDDLSSRLAARLIRMGVTSGHIIPIYSPKSRWTVIAILGVLKTGAAFTLLETSHPTARLRVICNEIKADIIIAPASHAVPAATLAPILVVLDSITSMSPQESDLLPAVGMPPAAEALAYLIFTSGSTGNPKGVMVTHQNLCSNASIMTTSVNMTSDSRVLHFASHAFDACLWEIFGALFAGACLIIPSESETKEDLAGCIERMVVTWAFLTPSVARILKPEALPSLRNLVLGGEPIAASDLDMWRGHVQVVCAYGPTETAILASTTSPSTFPSDGKDIGVPTGSSLWIVDKQNYNKLAPHGATGELLIEGPNVSQGYLGDPEKTNEAFPVAPRWLSQLRKSPTRVYRTGDLVRFNTSTGTIHFVGRKDNQIKFHGQRIELGDIEHHAQQAFSNASMVIVDLITPEQPQQPYIVAFVHQADTRTGTADPIDTILLPPSESFRADAIGAQNHMHKRLPHYMVPTAFLPLHRLPLSGTGKADRKRLRQCALSLSSLELNAYRATASAKRMPFTAAECKMQELVATVLGRDMSEIGMDDSFFYLGGDSIQAMRLVSEGRQQGLTLSLQAIFDAPRLGDLAYRTANLVRVSEPAPPTLPATSSDDCDHKETIVAALPIKKTDVAEVLPTTSFQRTWLDSQLKSYIVVDIPGPIDLARLRTAIQRVVKAHPILRASFVPYETTTMQVILRTAVVITEADLSTTTVEGICRKDANAPMAPGTPYLRVILATQGEVDRKLIMRLSHAQYDGISLSLLMNDLSHAYASESRPLPSSHLPAFNDYITYQQTQGADPTATTFWHRLLKDVPITYLDLQPAETPTSNGSLITRTRDINIAAFPSLPNGITTATAVKAAWSLVLAQKTGSLAVIFGQVVHGRGIALTGVEGIVGPCANITPVVARLGPQTTRMELMQTLQDQHRSAMPYETAGRKELQTIVQHQNNVMADDMELSLGEARWGKTGYVGGEDHVVDVGVE</sequence>
<comment type="function">
    <text evidence="8 11">Nonribosomal peptide synthetase; part of the gene cluster that mediates the biosynthesis of malformins, cyclic pentapeptides with a disulfide bond between 2 consecutive cysteins, that show potential anti-tumor as well as antimalarial and antitrypanosomal properties (PubMed:30560908). The nonribosomal peptide synthetase mlfA is responsible of the formation of the cyclic pentapeptide (Probable). The malformin biosynthesis clusters in malformin-producing fungi also contain enzymes involved in the formation of the disulfide bond between the two consecutive cysteins within malformins, in addition to additional tailoring enzymes such as methyltransferases or oxidoreductases. They are also composed of up to 4 major facilitator superfamily transporters, and transcription factors probably involved in the regulation of the expression of those clusters (Probable).</text>
</comment>
<comment type="pathway">
    <text evidence="11">Secondary metabolite biosynthesis.</text>
</comment>
<comment type="domain">
    <text evidence="11">NRP synthetases are composed of discrete domains (adenylation (A), thiolation (T) or peptidyl carrier protein (PCP) and condensation (C) domains) which when grouped together are referred to as a single module. Each module is responsible for the recognition (via the A domain) and incorporation of a single amino acid into the growing peptide product. Thus, an NRP synthetase is generally composed of one or more modules and can terminate in a thioesterase domain (TE) that releases the newly synthesized peptide from the enzyme. Occasionally, epimerase (E) domains (responsible for L- to D- amino acid conversion) are present within the NRP synthetase. MlfA has the following architecture: A-T-C-A-T-C-A-T-C-C-A-T-C, with the functions of the five condensation domains during malformin biosynthesis being DL-joining (epimerizing subtype), LL-joining, epimerization, DL-joining and cyclizing domain, respectively.</text>
</comment>
<comment type="biotechnology">
    <text evidence="4 5 6 7">Malformins show anti-tumor properties against human colorectal and prostate cancer cells by the inhibition of proliferation and induction of apoptosis through the activation of the p38 signaling pathway (PubMed:26540166, PubMed:26645406, PubMed:28713983). Malformin C has also been shown to exhibit potent antimalarial and antitrypanosomal properties (PubMed:19876076).</text>
</comment>
<comment type="similarity">
    <text evidence="10">Belongs to the NRP synthetase family.</text>
</comment>
<gene>
    <name evidence="9" type="primary">mlfA</name>
    <name type="ORF">ASPNIDRAFT_43807</name>
</gene>
<accession>G3XUF0</accession>
<reference key="1">
    <citation type="journal article" date="2011" name="Genome Res.">
        <title>Comparative genomics of citric-acid-producing Aspergillus niger ATCC 1015 versus enzyme-producing CBS 513.88.</title>
        <authorList>
            <person name="Andersen M.R."/>
            <person name="Salazar M.P."/>
            <person name="Schaap P.J."/>
            <person name="van de Vondervoort P.J.I."/>
            <person name="Culley D."/>
            <person name="Thykaer J."/>
            <person name="Frisvad J.C."/>
            <person name="Nielsen K.F."/>
            <person name="Albang R."/>
            <person name="Albermann K."/>
            <person name="Berka R.M."/>
            <person name="Braus G.H."/>
            <person name="Braus-Stromeyer S.A."/>
            <person name="Corrochano L.M."/>
            <person name="Dai Z."/>
            <person name="van Dijck P.W.M."/>
            <person name="Hofmann G."/>
            <person name="Lasure L.L."/>
            <person name="Magnuson J.K."/>
            <person name="Menke H."/>
            <person name="Meijer M."/>
            <person name="Meijer S.L."/>
            <person name="Nielsen J.B."/>
            <person name="Nielsen M.L."/>
            <person name="van Ooyen A.J.J."/>
            <person name="Pel H.J."/>
            <person name="Poulsen L."/>
            <person name="Samson R.A."/>
            <person name="Stam H."/>
            <person name="Tsang A."/>
            <person name="van den Brink J.M."/>
            <person name="Atkins A."/>
            <person name="Aerts A."/>
            <person name="Shapiro H."/>
            <person name="Pangilinan J."/>
            <person name="Salamov A."/>
            <person name="Lou Y."/>
            <person name="Lindquist E."/>
            <person name="Lucas S."/>
            <person name="Grimwood J."/>
            <person name="Grigoriev I.V."/>
            <person name="Kubicek C.P."/>
            <person name="Martinez D."/>
            <person name="van Peij N.N.M.E."/>
            <person name="Roubos J.A."/>
            <person name="Nielsen J."/>
            <person name="Baker S.E."/>
        </authorList>
    </citation>
    <scope>NUCLEOTIDE SEQUENCE [LARGE SCALE GENOMIC DNA]</scope>
    <source>
        <strain>ATCC 1015 / CBS 113.46 / FGSC A1144 / LSHB Ac4 / NCTC 3858a / NRRL 328 / USDA 3528.7</strain>
    </source>
</reference>
<reference key="2">
    <citation type="journal article" date="2009" name="J. Antibiot.">
        <title>Solid-phase synthesis and biological activity of malformin C and its derivatives.</title>
        <authorList>
            <person name="Kojima Y."/>
            <person name="Sunazuka T."/>
            <person name="Nagai K."/>
            <person name="Hirose T."/>
            <person name="Namatame M."/>
            <person name="Ishiyama A."/>
            <person name="Otoguro K."/>
            <person name="Omura S."/>
        </authorList>
    </citation>
    <scope>BIOTECHNOLOGY</scope>
</reference>
<reference key="3">
    <citation type="journal article" date="2015" name="PLoS ONE">
        <title>Study of malformin C, a fungal source cyclic pentapeptide, as an anti-cancer drug.</title>
        <authorList>
            <person name="Wang J."/>
            <person name="Jiang Z."/>
            <person name="Lam W."/>
            <person name="Gullen E.A."/>
            <person name="Yu Z."/>
            <person name="Wei Y."/>
            <person name="Wang L."/>
            <person name="Zeiss C."/>
            <person name="Beck A."/>
            <person name="Cheng E.C."/>
            <person name="Wu C."/>
            <person name="Cheng Y.C."/>
            <person name="Zhang Y."/>
        </authorList>
    </citation>
    <scope>BIOTECHNOLOGY</scope>
</reference>
<reference key="4">
    <citation type="journal article" date="2016" name="Cancer Chemother. Pharmacol.">
        <title>Malformin A1 promotes cell death through induction of apoptosis, necrosis and autophagy in prostate cancer cells.</title>
        <authorList>
            <person name="Liu Y."/>
            <person name="Wang M."/>
            <person name="Wang D."/>
            <person name="Li X."/>
            <person name="Wang W."/>
            <person name="Lou H."/>
            <person name="Yuan H."/>
        </authorList>
    </citation>
    <scope>BIOTECHNOLOGY</scope>
</reference>
<reference key="5">
    <citation type="journal article" date="2017" name="Int. J. Oncol.">
        <title>Malformin A1 treatment alters invasive and oncogenic phenotypes of human colorectal cancer cells through stimulation of the p38 signaling pathway.</title>
        <authorList>
            <person name="Park S.Y."/>
            <person name="Oh H.H."/>
            <person name="Park Y.L."/>
            <person name="Yu H.M."/>
            <person name="Myung D.S."/>
            <person name="Cho S.B."/>
            <person name="Lee W.S."/>
            <person name="Park D."/>
            <person name="Joo Y.E."/>
        </authorList>
    </citation>
    <scope>BIOTECHNOLOGY</scope>
</reference>
<reference key="6">
    <citation type="journal article" date="2018" name="Sci. Rep.">
        <title>Uncovering secondary metabolite evolution and biosynthesis using gene cluster networks and genetic dereplication.</title>
        <authorList>
            <person name="Theobald S."/>
            <person name="Vesth T.C."/>
            <person name="Rendsvig J.K."/>
            <person name="Nielsen K.F."/>
            <person name="Riley R."/>
            <person name="de Abreu L.M."/>
            <person name="Salamov A."/>
            <person name="Frisvad J.C."/>
            <person name="Larsen T.O."/>
            <person name="Andersen M.R."/>
            <person name="Hoof J.B."/>
        </authorList>
    </citation>
    <scope>IDENTIFICATION</scope>
    <scope>FUNCTION</scope>
    <scope>PATHWAY</scope>
</reference>
<feature type="chain" id="PRO_0000446435" description="Malformin synthetase mlfA">
    <location>
        <begin position="1"/>
        <end position="4870"/>
    </location>
</feature>
<feature type="domain" description="Carrier 1" evidence="2">
    <location>
        <begin position="635"/>
        <end position="711"/>
    </location>
</feature>
<feature type="domain" description="Carrier 2" evidence="2">
    <location>
        <begin position="1688"/>
        <end position="1765"/>
    </location>
</feature>
<feature type="domain" description="Carrier 3" evidence="2">
    <location>
        <begin position="2864"/>
        <end position="2940"/>
    </location>
</feature>
<feature type="domain" description="Carrier 4" evidence="2">
    <location>
        <begin position="4411"/>
        <end position="4487"/>
    </location>
</feature>
<feature type="region of interest" description="Adenylation 1" evidence="1">
    <location>
        <begin position="106"/>
        <end position="497"/>
    </location>
</feature>
<feature type="region of interest" description="Condensation 1" evidence="1">
    <location>
        <begin position="749"/>
        <end position="1133"/>
    </location>
</feature>
<feature type="region of interest" description="Adenylation 2" evidence="1">
    <location>
        <begin position="1161"/>
        <end position="1550"/>
    </location>
</feature>
<feature type="region of interest" description="Disordered" evidence="3">
    <location>
        <begin position="1764"/>
        <end position="1794"/>
    </location>
</feature>
<feature type="region of interest" description="Disordered" evidence="3">
    <location>
        <begin position="1829"/>
        <end position="1859"/>
    </location>
</feature>
<feature type="region of interest" description="Condensation 2" evidence="1">
    <location>
        <begin position="1898"/>
        <end position="2313"/>
    </location>
</feature>
<feature type="region of interest" description="Adenylation 3" evidence="1">
    <location>
        <begin position="2336"/>
        <end position="2728"/>
    </location>
</feature>
<feature type="region of interest" description="Condensation 3" evidence="1">
    <location>
        <begin position="2957"/>
        <end position="3422"/>
    </location>
</feature>
<feature type="region of interest" description="Condensation 4" evidence="1">
    <location>
        <begin position="3443"/>
        <end position="3862"/>
    </location>
</feature>
<feature type="region of interest" description="Adenylation 4" evidence="1">
    <location>
        <begin position="3887"/>
        <end position="4277"/>
    </location>
</feature>
<feature type="region of interest" description="Condensation 5" evidence="1">
    <location>
        <begin position="4524"/>
        <end position="4837"/>
    </location>
</feature>
<feature type="compositionally biased region" description="Low complexity" evidence="3">
    <location>
        <begin position="1769"/>
        <end position="1792"/>
    </location>
</feature>
<feature type="compositionally biased region" description="Low complexity" evidence="3">
    <location>
        <begin position="1830"/>
        <end position="1846"/>
    </location>
</feature>
<feature type="modified residue" description="O-(pantetheine 4'-phosphoryl)serine" evidence="2">
    <location>
        <position position="672"/>
    </location>
</feature>
<feature type="modified residue" description="O-(pantetheine 4'-phosphoryl)serine" evidence="2">
    <location>
        <position position="1725"/>
    </location>
</feature>
<feature type="modified residue" description="O-(pantetheine 4'-phosphoryl)serine" evidence="2">
    <location>
        <position position="2901"/>
    </location>
</feature>
<feature type="modified residue" description="O-(pantetheine 4'-phosphoryl)serine" evidence="2">
    <location>
        <position position="4448"/>
    </location>
</feature>
<keyword id="KW-0436">Ligase</keyword>
<keyword id="KW-0596">Phosphopantetheine</keyword>
<keyword id="KW-0597">Phosphoprotein</keyword>
<keyword id="KW-0677">Repeat</keyword>
<evidence type="ECO:0000255" key="1"/>
<evidence type="ECO:0000255" key="2">
    <source>
        <dbReference type="PROSITE-ProRule" id="PRU00258"/>
    </source>
</evidence>
<evidence type="ECO:0000256" key="3">
    <source>
        <dbReference type="SAM" id="MobiDB-lite"/>
    </source>
</evidence>
<evidence type="ECO:0000269" key="4">
    <source>
    </source>
</evidence>
<evidence type="ECO:0000269" key="5">
    <source>
    </source>
</evidence>
<evidence type="ECO:0000269" key="6">
    <source>
    </source>
</evidence>
<evidence type="ECO:0000269" key="7">
    <source>
    </source>
</evidence>
<evidence type="ECO:0000269" key="8">
    <source>
    </source>
</evidence>
<evidence type="ECO:0000303" key="9">
    <source>
    </source>
</evidence>
<evidence type="ECO:0000305" key="10"/>
<evidence type="ECO:0000305" key="11">
    <source>
    </source>
</evidence>
<organism>
    <name type="scientific">Aspergillus niger (strain ATCC 1015 / CBS 113.46 / FGSC A1144 / LSHB Ac4 / NCTC 3858a / NRRL 328 / USDA 3528.7)</name>
    <dbReference type="NCBI Taxonomy" id="380704"/>
    <lineage>
        <taxon>Eukaryota</taxon>
        <taxon>Fungi</taxon>
        <taxon>Dikarya</taxon>
        <taxon>Ascomycota</taxon>
        <taxon>Pezizomycotina</taxon>
        <taxon>Eurotiomycetes</taxon>
        <taxon>Eurotiomycetidae</taxon>
        <taxon>Eurotiales</taxon>
        <taxon>Aspergillaceae</taxon>
        <taxon>Aspergillus</taxon>
        <taxon>Aspergillus subgen. Circumdati</taxon>
    </lineage>
</organism>
<protein>
    <recommendedName>
        <fullName evidence="9">Malformin synthetase mlfA</fullName>
        <ecNumber evidence="8">6.3.2.-</ecNumber>
    </recommendedName>
    <alternativeName>
        <fullName evidence="9">Malformin biosynthesis cluster protein A</fullName>
    </alternativeName>
    <alternativeName>
        <fullName evidence="9">Nonribosomal peptide synthetase mlfA</fullName>
    </alternativeName>
</protein>